<evidence type="ECO:0000250" key="1"/>
<evidence type="ECO:0000255" key="2">
    <source>
        <dbReference type="PROSITE-ProRule" id="PRU01100"/>
    </source>
</evidence>
<evidence type="ECO:0000255" key="3">
    <source>
        <dbReference type="PROSITE-ProRule" id="PRU01102"/>
    </source>
</evidence>
<evidence type="ECO:0000256" key="4">
    <source>
        <dbReference type="SAM" id="MobiDB-lite"/>
    </source>
</evidence>
<evidence type="ECO:0000305" key="5"/>
<evidence type="ECO:0007829" key="6">
    <source>
        <dbReference type="PDB" id="2LRP"/>
    </source>
</evidence>
<evidence type="ECO:0007829" key="7">
    <source>
        <dbReference type="PDB" id="2V3G"/>
    </source>
</evidence>
<evidence type="ECO:0007829" key="8">
    <source>
        <dbReference type="PDB" id="4U3A"/>
    </source>
</evidence>
<evidence type="ECO:0007829" key="9">
    <source>
        <dbReference type="PDB" id="5BYW"/>
    </source>
</evidence>
<evidence type="ECO:0007829" key="10">
    <source>
        <dbReference type="PDB" id="6R3M"/>
    </source>
</evidence>
<organism>
    <name type="scientific">Acetivibrio thermocellus (strain ATCC 27405 / DSM 1237 / JCM 9322 / NBRC 103400 / NCIMB 10682 / NRRL B-4536 / VPI 7372)</name>
    <name type="common">Clostridium thermocellum</name>
    <dbReference type="NCBI Taxonomy" id="203119"/>
    <lineage>
        <taxon>Bacteria</taxon>
        <taxon>Bacillati</taxon>
        <taxon>Bacillota</taxon>
        <taxon>Clostridia</taxon>
        <taxon>Eubacteriales</taxon>
        <taxon>Oscillospiraceae</taxon>
        <taxon>Acetivibrio</taxon>
    </lineage>
</organism>
<dbReference type="EC" id="3.2.1.4"/>
<dbReference type="EMBL" id="M31903">
    <property type="protein sequence ID" value="AAA23225.1"/>
    <property type="molecule type" value="Genomic_DNA"/>
</dbReference>
<dbReference type="EMBL" id="CP000568">
    <property type="protein sequence ID" value="ABN52701.1"/>
    <property type="molecule type" value="Genomic_DNA"/>
</dbReference>
<dbReference type="PIR" id="JH0157">
    <property type="entry name" value="JH0157"/>
</dbReference>
<dbReference type="RefSeq" id="WP_011838089.1">
    <property type="nucleotide sequence ID" value="NC_009012.1"/>
</dbReference>
<dbReference type="PDB" id="1V0A">
    <property type="method" value="X-ray"/>
    <property type="resolution" value="1.98 A"/>
    <property type="chains" value="A=655-821"/>
</dbReference>
<dbReference type="PDB" id="2BV9">
    <property type="method" value="X-ray"/>
    <property type="resolution" value="1.50 A"/>
    <property type="chains" value="A=26-304"/>
</dbReference>
<dbReference type="PDB" id="2BVD">
    <property type="method" value="X-ray"/>
    <property type="resolution" value="1.60 A"/>
    <property type="chains" value="A=26-304"/>
</dbReference>
<dbReference type="PDB" id="2CIP">
    <property type="method" value="X-ray"/>
    <property type="resolution" value="1.40 A"/>
    <property type="chains" value="A=26-304"/>
</dbReference>
<dbReference type="PDB" id="2CIT">
    <property type="method" value="X-ray"/>
    <property type="resolution" value="1.40 A"/>
    <property type="chains" value="A=26-304"/>
</dbReference>
<dbReference type="PDB" id="2LRO">
    <property type="method" value="NMR"/>
    <property type="chains" value="A=655-821"/>
</dbReference>
<dbReference type="PDB" id="2LRP">
    <property type="method" value="NMR"/>
    <property type="chains" value="A=655-821"/>
</dbReference>
<dbReference type="PDB" id="2V3G">
    <property type="method" value="X-ray"/>
    <property type="resolution" value="1.20 A"/>
    <property type="chains" value="A=26-305"/>
</dbReference>
<dbReference type="PDB" id="2VI0">
    <property type="method" value="X-ray"/>
    <property type="resolution" value="1.51 A"/>
    <property type="chains" value="A=26-304"/>
</dbReference>
<dbReference type="PDB" id="4U3A">
    <property type="method" value="X-ray"/>
    <property type="resolution" value="2.42 A"/>
    <property type="chains" value="A/B=290-654"/>
</dbReference>
<dbReference type="PDB" id="4U5I">
    <property type="method" value="X-ray"/>
    <property type="resolution" value="2.50 A"/>
    <property type="chains" value="A/B=290-654"/>
</dbReference>
<dbReference type="PDB" id="4U5K">
    <property type="method" value="X-ray"/>
    <property type="resolution" value="2.65 A"/>
    <property type="chains" value="A/B=290-654"/>
</dbReference>
<dbReference type="PDB" id="5BYW">
    <property type="method" value="X-ray"/>
    <property type="resolution" value="2.60 A"/>
    <property type="chains" value="A/B/C/D/E=290-654"/>
</dbReference>
<dbReference type="PDB" id="6R31">
    <property type="method" value="X-ray"/>
    <property type="resolution" value="2.60 A"/>
    <property type="chains" value="A=655-821"/>
</dbReference>
<dbReference type="PDB" id="6R3M">
    <property type="method" value="X-ray"/>
    <property type="resolution" value="1.45 A"/>
    <property type="chains" value="A=655-821"/>
</dbReference>
<dbReference type="PDB" id="6ZPL">
    <property type="method" value="X-ray"/>
    <property type="resolution" value="3.94 A"/>
    <property type="chains" value="C=31-303"/>
</dbReference>
<dbReference type="PDB" id="7XP4">
    <property type="method" value="EM"/>
    <property type="resolution" value="3.01 A"/>
    <property type="chains" value="R=26-304"/>
</dbReference>
<dbReference type="PDB" id="7XP5">
    <property type="method" value="EM"/>
    <property type="resolution" value="3.08 A"/>
    <property type="chains" value="R=26-304"/>
</dbReference>
<dbReference type="PDB" id="7XP6">
    <property type="method" value="EM"/>
    <property type="resolution" value="3.01 A"/>
    <property type="chains" value="R=26-304"/>
</dbReference>
<dbReference type="PDB" id="8XVI">
    <property type="method" value="EM"/>
    <property type="resolution" value="3.32 A"/>
    <property type="chains" value="R=26-304"/>
</dbReference>
<dbReference type="PDB" id="8XVJ">
    <property type="method" value="EM"/>
    <property type="resolution" value="3.26 A"/>
    <property type="chains" value="R=26-304"/>
</dbReference>
<dbReference type="PDB" id="8XVK">
    <property type="method" value="EM"/>
    <property type="resolution" value="3.21 A"/>
    <property type="chains" value="R=26-304"/>
</dbReference>
<dbReference type="PDB" id="8XVL">
    <property type="method" value="EM"/>
    <property type="resolution" value="3.22 A"/>
    <property type="chains" value="R=26-304"/>
</dbReference>
<dbReference type="PDBsum" id="1V0A"/>
<dbReference type="PDBsum" id="2BV9"/>
<dbReference type="PDBsum" id="2BVD"/>
<dbReference type="PDBsum" id="2CIP"/>
<dbReference type="PDBsum" id="2CIT"/>
<dbReference type="PDBsum" id="2LRO"/>
<dbReference type="PDBsum" id="2LRP"/>
<dbReference type="PDBsum" id="2V3G"/>
<dbReference type="PDBsum" id="2VI0"/>
<dbReference type="PDBsum" id="4U3A"/>
<dbReference type="PDBsum" id="4U5I"/>
<dbReference type="PDBsum" id="4U5K"/>
<dbReference type="PDBsum" id="5BYW"/>
<dbReference type="PDBsum" id="6R31"/>
<dbReference type="PDBsum" id="6R3M"/>
<dbReference type="PDBsum" id="6ZPL"/>
<dbReference type="PDBsum" id="7XP4"/>
<dbReference type="PDBsum" id="7XP5"/>
<dbReference type="PDBsum" id="7XP6"/>
<dbReference type="PDBsum" id="8XVI"/>
<dbReference type="PDBsum" id="8XVJ"/>
<dbReference type="PDBsum" id="8XVK"/>
<dbReference type="PDBsum" id="8XVL"/>
<dbReference type="BMRB" id="P16218"/>
<dbReference type="SMR" id="P16218"/>
<dbReference type="STRING" id="203119.Cthe_1472"/>
<dbReference type="DrugBank" id="DB08785">
    <property type="generic name" value="4-Methylcoumarin"/>
</dbReference>
<dbReference type="CAZy" id="CBM11">
    <property type="family name" value="Carbohydrate-Binding Module Family 11"/>
</dbReference>
<dbReference type="CAZy" id="GH26">
    <property type="family name" value="Glycoside Hydrolase Family 26"/>
</dbReference>
<dbReference type="CAZy" id="GH5">
    <property type="family name" value="Glycoside Hydrolase Family 5"/>
</dbReference>
<dbReference type="GeneID" id="35805724"/>
<dbReference type="KEGG" id="cth:Cthe_1472"/>
<dbReference type="eggNOG" id="COG2730">
    <property type="taxonomic scope" value="Bacteria"/>
</dbReference>
<dbReference type="eggNOG" id="COG4124">
    <property type="taxonomic scope" value="Bacteria"/>
</dbReference>
<dbReference type="HOGENOM" id="CLU_321778_0_0_9"/>
<dbReference type="OrthoDB" id="9800955at2"/>
<dbReference type="BioCyc" id="MetaCyc:MONOMER-16422"/>
<dbReference type="EvolutionaryTrace" id="P16218"/>
<dbReference type="Proteomes" id="UP000002145">
    <property type="component" value="Chromosome"/>
</dbReference>
<dbReference type="GO" id="GO:0009986">
    <property type="term" value="C:cell surface"/>
    <property type="evidence" value="ECO:0007669"/>
    <property type="project" value="TreeGrafter"/>
</dbReference>
<dbReference type="GO" id="GO:0005576">
    <property type="term" value="C:extracellular region"/>
    <property type="evidence" value="ECO:0007669"/>
    <property type="project" value="TreeGrafter"/>
</dbReference>
<dbReference type="GO" id="GO:0008422">
    <property type="term" value="F:beta-glucosidase activity"/>
    <property type="evidence" value="ECO:0007669"/>
    <property type="project" value="TreeGrafter"/>
</dbReference>
<dbReference type="GO" id="GO:0008810">
    <property type="term" value="F:cellulase activity"/>
    <property type="evidence" value="ECO:0000315"/>
    <property type="project" value="MENGO"/>
</dbReference>
<dbReference type="GO" id="GO:0030245">
    <property type="term" value="P:cellulose catabolic process"/>
    <property type="evidence" value="ECO:0007669"/>
    <property type="project" value="UniProtKB-KW"/>
</dbReference>
<dbReference type="CDD" id="cd14256">
    <property type="entry name" value="Dockerin_I"/>
    <property type="match status" value="1"/>
</dbReference>
<dbReference type="FunFam" id="1.10.1330.10:FF:000001">
    <property type="entry name" value="Endoglucanase D"/>
    <property type="match status" value="1"/>
</dbReference>
<dbReference type="Gene3D" id="1.10.1330.10">
    <property type="entry name" value="Dockerin domain"/>
    <property type="match status" value="1"/>
</dbReference>
<dbReference type="Gene3D" id="2.60.120.430">
    <property type="entry name" value="Galactose-binding lectin"/>
    <property type="match status" value="1"/>
</dbReference>
<dbReference type="Gene3D" id="3.20.20.80">
    <property type="entry name" value="Glycosidases"/>
    <property type="match status" value="2"/>
</dbReference>
<dbReference type="InterPro" id="IPR005087">
    <property type="entry name" value="CBM11"/>
</dbReference>
<dbReference type="InterPro" id="IPR002105">
    <property type="entry name" value="Dockerin_1_rpt"/>
</dbReference>
<dbReference type="InterPro" id="IPR016134">
    <property type="entry name" value="Dockerin_dom"/>
</dbReference>
<dbReference type="InterPro" id="IPR036439">
    <property type="entry name" value="Dockerin_dom_sf"/>
</dbReference>
<dbReference type="InterPro" id="IPR008979">
    <property type="entry name" value="Galactose-bd-like_sf"/>
</dbReference>
<dbReference type="InterPro" id="IPR022790">
    <property type="entry name" value="GH26_dom"/>
</dbReference>
<dbReference type="InterPro" id="IPR001547">
    <property type="entry name" value="Glyco_hydro_5"/>
</dbReference>
<dbReference type="InterPro" id="IPR018087">
    <property type="entry name" value="Glyco_hydro_5_CS"/>
</dbReference>
<dbReference type="InterPro" id="IPR017853">
    <property type="entry name" value="Glycoside_hydrolase_SF"/>
</dbReference>
<dbReference type="InterPro" id="IPR050386">
    <property type="entry name" value="Glycosyl_hydrolase_5"/>
</dbReference>
<dbReference type="PANTHER" id="PTHR31297:SF17">
    <property type="entry name" value="ENDOGLUCANASE"/>
    <property type="match status" value="1"/>
</dbReference>
<dbReference type="PANTHER" id="PTHR31297">
    <property type="entry name" value="GLUCAN ENDO-1,6-BETA-GLUCOSIDASE B"/>
    <property type="match status" value="1"/>
</dbReference>
<dbReference type="Pfam" id="PF03425">
    <property type="entry name" value="CBM_11"/>
    <property type="match status" value="1"/>
</dbReference>
<dbReference type="Pfam" id="PF00150">
    <property type="entry name" value="Cellulase"/>
    <property type="match status" value="1"/>
</dbReference>
<dbReference type="Pfam" id="PF00404">
    <property type="entry name" value="Dockerin_1"/>
    <property type="match status" value="1"/>
</dbReference>
<dbReference type="Pfam" id="PF02156">
    <property type="entry name" value="Glyco_hydro_26"/>
    <property type="match status" value="1"/>
</dbReference>
<dbReference type="SUPFAM" id="SSF51445">
    <property type="entry name" value="(Trans)glycosidases"/>
    <property type="match status" value="2"/>
</dbReference>
<dbReference type="SUPFAM" id="SSF49785">
    <property type="entry name" value="Galactose-binding domain-like"/>
    <property type="match status" value="1"/>
</dbReference>
<dbReference type="SUPFAM" id="SSF63446">
    <property type="entry name" value="Type I dockerin domain"/>
    <property type="match status" value="1"/>
</dbReference>
<dbReference type="PROSITE" id="PS00448">
    <property type="entry name" value="CLOS_CELLULOSOME_RPT"/>
    <property type="match status" value="2"/>
</dbReference>
<dbReference type="PROSITE" id="PS51766">
    <property type="entry name" value="DOCKERIN"/>
    <property type="match status" value="1"/>
</dbReference>
<dbReference type="PROSITE" id="PS00018">
    <property type="entry name" value="EF_HAND_1"/>
    <property type="match status" value="1"/>
</dbReference>
<dbReference type="PROSITE" id="PS51764">
    <property type="entry name" value="GH26"/>
    <property type="match status" value="1"/>
</dbReference>
<dbReference type="PROSITE" id="PS00659">
    <property type="entry name" value="GLYCOSYL_HYDROL_F5"/>
    <property type="match status" value="1"/>
</dbReference>
<gene>
    <name type="primary">celH</name>
    <name type="ordered locus">Cthe_1472</name>
</gene>
<keyword id="KW-0002">3D-structure</keyword>
<keyword id="KW-0119">Carbohydrate metabolism</keyword>
<keyword id="KW-0136">Cellulose degradation</keyword>
<keyword id="KW-0326">Glycosidase</keyword>
<keyword id="KW-0378">Hydrolase</keyword>
<keyword id="KW-0624">Polysaccharide degradation</keyword>
<keyword id="KW-1185">Reference proteome</keyword>
<keyword id="KW-0732">Signal</keyword>
<accession>P16218</accession>
<accession>A3DFH2</accession>
<feature type="signal peptide">
    <location>
        <begin position="1"/>
        <end position="44"/>
    </location>
</feature>
<feature type="chain" id="PRO_0000007854" description="Endoglucanase H">
    <location>
        <begin position="45"/>
        <end position="900"/>
    </location>
</feature>
<feature type="domain" description="GH26" evidence="2">
    <location>
        <begin position="45"/>
        <end position="298"/>
    </location>
</feature>
<feature type="domain" description="CBM11">
    <location>
        <begin position="655"/>
        <end position="900"/>
    </location>
</feature>
<feature type="domain" description="Dockerin" evidence="3">
    <location>
        <begin position="827"/>
        <end position="900"/>
    </location>
</feature>
<feature type="region of interest" description="Catalytic" evidence="1">
    <location>
        <begin position="300"/>
        <end position="630"/>
    </location>
</feature>
<feature type="region of interest" description="Disordered" evidence="4">
    <location>
        <begin position="303"/>
        <end position="326"/>
    </location>
</feature>
<feature type="compositionally biased region" description="Low complexity" evidence="4">
    <location>
        <begin position="306"/>
        <end position="324"/>
    </location>
</feature>
<feature type="active site" description="Proton donor" evidence="2">
    <location>
        <position position="131"/>
    </location>
</feature>
<feature type="active site" description="Nucleophile" evidence="2">
    <location>
        <position position="244"/>
    </location>
</feature>
<feature type="active site" description="Proton donor" evidence="1">
    <location>
        <position position="460"/>
    </location>
</feature>
<feature type="active site" description="Nucleophile" evidence="1">
    <location>
        <position position="565"/>
    </location>
</feature>
<feature type="strand" evidence="7">
    <location>
        <begin position="32"/>
        <end position="36"/>
    </location>
</feature>
<feature type="helix" evidence="7">
    <location>
        <begin position="43"/>
        <end position="53"/>
    </location>
</feature>
<feature type="strand" evidence="7">
    <location>
        <begin position="58"/>
        <end position="65"/>
    </location>
</feature>
<feature type="helix" evidence="7">
    <location>
        <begin position="70"/>
        <end position="82"/>
    </location>
</feature>
<feature type="strand" evidence="7">
    <location>
        <begin position="86"/>
        <end position="92"/>
    </location>
</feature>
<feature type="helix" evidence="7">
    <location>
        <begin position="98"/>
        <end position="102"/>
    </location>
</feature>
<feature type="turn" evidence="7">
    <location>
        <begin position="103"/>
        <end position="106"/>
    </location>
</feature>
<feature type="helix" evidence="7">
    <location>
        <begin position="107"/>
        <end position="120"/>
    </location>
</feature>
<feature type="strand" evidence="7">
    <location>
        <begin position="124"/>
        <end position="129"/>
    </location>
</feature>
<feature type="strand" evidence="7">
    <location>
        <begin position="134"/>
        <end position="137"/>
    </location>
</feature>
<feature type="helix" evidence="7">
    <location>
        <begin position="150"/>
        <end position="166"/>
    </location>
</feature>
<feature type="strand" evidence="7">
    <location>
        <begin position="172"/>
        <end position="175"/>
    </location>
</feature>
<feature type="strand" evidence="7">
    <location>
        <begin position="178"/>
        <end position="181"/>
    </location>
</feature>
<feature type="helix" evidence="7">
    <location>
        <begin position="196"/>
        <end position="198"/>
    </location>
</feature>
<feature type="strand" evidence="7">
    <location>
        <begin position="200"/>
        <end position="208"/>
    </location>
</feature>
<feature type="turn" evidence="7">
    <location>
        <begin position="214"/>
        <end position="216"/>
    </location>
</feature>
<feature type="helix" evidence="7">
    <location>
        <begin position="222"/>
        <end position="233"/>
    </location>
</feature>
<feature type="strand" evidence="7">
    <location>
        <begin position="236"/>
        <end position="238"/>
    </location>
</feature>
<feature type="strand" evidence="7">
    <location>
        <begin position="240"/>
        <end position="247"/>
    </location>
</feature>
<feature type="helix" evidence="7">
    <location>
        <begin position="254"/>
        <end position="268"/>
    </location>
</feature>
<feature type="strand" evidence="7">
    <location>
        <begin position="272"/>
        <end position="278"/>
    </location>
</feature>
<feature type="strand" evidence="7">
    <location>
        <begin position="281"/>
        <end position="285"/>
    </location>
</feature>
<feature type="helix" evidence="7">
    <location>
        <begin position="292"/>
        <end position="301"/>
    </location>
</feature>
<feature type="helix" evidence="8">
    <location>
        <begin position="329"/>
        <end position="336"/>
    </location>
</feature>
<feature type="strand" evidence="8">
    <location>
        <begin position="338"/>
        <end position="341"/>
    </location>
</feature>
<feature type="strand" evidence="8">
    <location>
        <begin position="348"/>
        <end position="350"/>
    </location>
</feature>
<feature type="strand" evidence="8">
    <location>
        <begin position="353"/>
        <end position="355"/>
    </location>
</feature>
<feature type="helix" evidence="8">
    <location>
        <begin position="360"/>
        <end position="369"/>
    </location>
</feature>
<feature type="strand" evidence="8">
    <location>
        <begin position="373"/>
        <end position="376"/>
    </location>
</feature>
<feature type="helix" evidence="8">
    <location>
        <begin position="381"/>
        <end position="383"/>
    </location>
</feature>
<feature type="helix" evidence="8">
    <location>
        <begin position="394"/>
        <end position="409"/>
    </location>
</feature>
<feature type="strand" evidence="8">
    <location>
        <begin position="413"/>
        <end position="417"/>
    </location>
</feature>
<feature type="helix" evidence="8">
    <location>
        <begin position="423"/>
        <end position="426"/>
    </location>
</feature>
<feature type="helix" evidence="8">
    <location>
        <begin position="428"/>
        <end position="445"/>
    </location>
</feature>
<feature type="turn" evidence="8">
    <location>
        <begin position="446"/>
        <end position="448"/>
    </location>
</feature>
<feature type="strand" evidence="8">
    <location>
        <begin position="453"/>
        <end position="456"/>
    </location>
</feature>
<feature type="strand" evidence="8">
    <location>
        <begin position="463"/>
        <end position="465"/>
    </location>
</feature>
<feature type="helix" evidence="8">
    <location>
        <begin position="467"/>
        <end position="484"/>
    </location>
</feature>
<feature type="strand" evidence="8">
    <location>
        <begin position="490"/>
        <end position="497"/>
    </location>
</feature>
<feature type="strand" evidence="8">
    <location>
        <begin position="502"/>
        <end position="504"/>
    </location>
</feature>
<feature type="strand" evidence="8">
    <location>
        <begin position="512"/>
        <end position="520"/>
    </location>
</feature>
<feature type="helix" evidence="9">
    <location>
        <begin position="524"/>
        <end position="527"/>
    </location>
</feature>
<feature type="helix" evidence="8">
    <location>
        <begin position="537"/>
        <end position="557"/>
    </location>
</feature>
<feature type="strand" evidence="8">
    <location>
        <begin position="561"/>
        <end position="566"/>
    </location>
</feature>
<feature type="strand" evidence="8">
    <location>
        <begin position="571"/>
        <end position="573"/>
    </location>
</feature>
<feature type="helix" evidence="8">
    <location>
        <begin position="574"/>
        <end position="590"/>
    </location>
</feature>
<feature type="strand" evidence="8">
    <location>
        <begin position="594"/>
        <end position="597"/>
    </location>
</feature>
<feature type="helix" evidence="9">
    <location>
        <begin position="606"/>
        <end position="608"/>
    </location>
</feature>
<feature type="strand" evidence="8">
    <location>
        <begin position="612"/>
        <end position="614"/>
    </location>
</feature>
<feature type="turn" evidence="8">
    <location>
        <begin position="615"/>
        <end position="618"/>
    </location>
</feature>
<feature type="helix" evidence="8">
    <location>
        <begin position="622"/>
        <end position="628"/>
    </location>
</feature>
<feature type="strand" evidence="10">
    <location>
        <begin position="656"/>
        <end position="662"/>
    </location>
</feature>
<feature type="strand" evidence="10">
    <location>
        <begin position="664"/>
        <end position="666"/>
    </location>
</feature>
<feature type="strand" evidence="10">
    <location>
        <begin position="671"/>
        <end position="675"/>
    </location>
</feature>
<feature type="strand" evidence="10">
    <location>
        <begin position="679"/>
        <end position="686"/>
    </location>
</feature>
<feature type="strand" evidence="10">
    <location>
        <begin position="688"/>
        <end position="698"/>
    </location>
</feature>
<feature type="strand" evidence="10">
    <location>
        <begin position="704"/>
        <end position="710"/>
    </location>
</feature>
<feature type="strand" evidence="10">
    <location>
        <begin position="721"/>
        <end position="728"/>
    </location>
</feature>
<feature type="strand" evidence="6">
    <location>
        <begin position="730"/>
        <end position="732"/>
    </location>
</feature>
<feature type="strand" evidence="10">
    <location>
        <begin position="736"/>
        <end position="743"/>
    </location>
</feature>
<feature type="strand" evidence="10">
    <location>
        <begin position="745"/>
        <end position="758"/>
    </location>
</feature>
<feature type="strand" evidence="10">
    <location>
        <begin position="765"/>
        <end position="770"/>
    </location>
</feature>
<feature type="helix" evidence="10">
    <location>
        <begin position="771"/>
        <end position="773"/>
    </location>
</feature>
<feature type="strand" evidence="6">
    <location>
        <begin position="788"/>
        <end position="790"/>
    </location>
</feature>
<feature type="strand" evidence="10">
    <location>
        <begin position="795"/>
        <end position="806"/>
    </location>
</feature>
<feature type="strand" evidence="10">
    <location>
        <begin position="808"/>
        <end position="819"/>
    </location>
</feature>
<sequence length="900" mass="102416">MKKRLLVSFLVLSIIVGLLSFQSLGNYNSGLKIGAWVGTQPSESAIKSFQELQGRKLDIVHQFINWSTDFSWVRPYADAVYNNGSILMITWEPWEYNTVDIKNGKADAYITRMAQDMKAYGKEIWLRPLHEANGDWYPWAIGYSSRVNTNETYIAAFRHIVDIFRANGATNVKWVFNVNCDNVGNGTSYLGHYPGDNYVDYTSIDGYNWGTTQSWGSQWQSFDQVFSRAYQALASINKPIIIAEFASAEIGGNKARWITEAYNSIRTSYNKVIAAVWFHENKETDWRINSSPEALAAYREAIGAGSSNPTPTPTWTSTPPSSSPKAVDPFEMVRKMGMGTNLGNTLEAPYEGSWSKSAMEYYFDDFKAAGYKNVRIPVRWDNHTMRTYPYTIDKAFLDRVEQVVDWSLSRGFVTIINSHHDDWIKEDYNGNIERFEKIWEQIAERFKNKSENLLFEIMNEPFGNITDEQIDDMNSRILKIIRKTNPTRIVIIGGGYWNSYNTLVNIKIPDDPYLIGTFHYYDPYEFTHKWRGTWGTQEDMDTVVRVFDFVKSWSDRNNIPVYFGEFAVMAYADRTSRVKWYDFISDAALERGFACSVWDNGVFGSLDNDMAIYNRDTRTFDTEILNALFNPGTYPSYSPKPSPTPRPTKPPVTPAVGEKMLDDFEGVLNWGSYSGEGAKVSTKIVSGKTGNGMEVSYTGTTDGYWGTVYSLPDGDWSKWLKISFDIKSVDGSANEIRFMIAEKSINGVGDGEHWVYSITPDSSWKTIEIPFSSFRRRLDYQPPGQDMSGTLDLDNIDSIHFMYANNKSGKFVVDNIKLIGATSDPTPSIKHGDLNFDNAVNSTDLLMLKRYILKSLELGTSEQEEKFKKAADLNRDNKVDSTDLTILKRYLLKAISEIPI</sequence>
<comment type="function">
    <text>This enzyme catalyzes the endohydrolysis of 1,4-beta-glucosidic linkages in cellulose, lichenin and cereal beta-D-glucans.</text>
</comment>
<comment type="catalytic activity">
    <reaction>
        <text>Endohydrolysis of (1-&gt;4)-beta-D-glucosidic linkages in cellulose, lichenin and cereal beta-D-glucans.</text>
        <dbReference type="EC" id="3.2.1.4"/>
    </reaction>
</comment>
<comment type="similarity">
    <text evidence="5">In the N-terminal section; belongs to the glycosyl hydrolase 5 (cellulase A) family.</text>
</comment>
<comment type="similarity">
    <text evidence="5">In the C-terminal section; belongs to the glycosyl hydrolase 26 family.</text>
</comment>
<protein>
    <recommendedName>
        <fullName>Endoglucanase H</fullName>
        <ecNumber>3.2.1.4</ecNumber>
    </recommendedName>
    <alternativeName>
        <fullName>Cellulase H</fullName>
    </alternativeName>
    <alternativeName>
        <fullName>Endo-1,4-beta-glucanase H</fullName>
        <shortName>EgH</shortName>
    </alternativeName>
</protein>
<proteinExistence type="evidence at protein level"/>
<reference key="1">
    <citation type="journal article" date="1990" name="Gene">
        <title>Nucleotide sequence and deletion analysis of the cellulase-encoding gene celH of Clostridium thermocellum.</title>
        <authorList>
            <person name="Yaguee E."/>
            <person name="Beguin P."/>
            <person name="Aubert J.-P."/>
        </authorList>
    </citation>
    <scope>NUCLEOTIDE SEQUENCE [GENOMIC DNA]</scope>
</reference>
<reference key="2">
    <citation type="submission" date="2007-02" db="EMBL/GenBank/DDBJ databases">
        <title>Complete sequence of Clostridium thermocellum ATCC 27405.</title>
        <authorList>
            <consortium name="US DOE Joint Genome Institute"/>
            <person name="Copeland A."/>
            <person name="Lucas S."/>
            <person name="Lapidus A."/>
            <person name="Barry K."/>
            <person name="Detter J.C."/>
            <person name="Glavina del Rio T."/>
            <person name="Hammon N."/>
            <person name="Israni S."/>
            <person name="Dalin E."/>
            <person name="Tice H."/>
            <person name="Pitluck S."/>
            <person name="Chertkov O."/>
            <person name="Brettin T."/>
            <person name="Bruce D."/>
            <person name="Han C."/>
            <person name="Tapia R."/>
            <person name="Gilna P."/>
            <person name="Schmutz J."/>
            <person name="Larimer F."/>
            <person name="Land M."/>
            <person name="Hauser L."/>
            <person name="Kyrpides N."/>
            <person name="Mikhailova N."/>
            <person name="Wu J.H.D."/>
            <person name="Newcomb M."/>
            <person name="Richardson P."/>
        </authorList>
    </citation>
    <scope>NUCLEOTIDE SEQUENCE [LARGE SCALE GENOMIC DNA]</scope>
    <source>
        <strain>ATCC 27405 / DSM 1237 / JCM 9322 / NBRC 103400 / NCIMB 10682 / NRRL B-4536 / VPI 7372</strain>
    </source>
</reference>
<name>GUNH_ACET2</name>